<accession>Q0SXG5</accession>
<sequence length="212" mass="23315">MSLFDKKHLVSPADALPGRNTPMPVATLHAVNGHSMTNVPDGMEIAIFAMGCFWGVERLFWQLPGVYSTAAGYTGGYTPNPTYREVCSGDTGHAEAVRIVYDPSVISYEQLLQVFWENHDPAQGMRQGNDHGTQYRSAIYPLTPEQDAAARASLERFQAAMLAADDDRHITTEIANATPFYYAEDDHQQYLHKNPYGYCGIGGIGVCLPPEA</sequence>
<name>MSRA_SHIF8</name>
<feature type="chain" id="PRO_1000068361" description="Peptide methionine sulfoxide reductase MsrA">
    <location>
        <begin position="1"/>
        <end position="212"/>
    </location>
</feature>
<feature type="active site" evidence="1">
    <location>
        <position position="52"/>
    </location>
</feature>
<protein>
    <recommendedName>
        <fullName evidence="1">Peptide methionine sulfoxide reductase MsrA</fullName>
        <shortName evidence="1">Protein-methionine-S-oxide reductase</shortName>
        <ecNumber evidence="1">1.8.4.11</ecNumber>
    </recommendedName>
    <alternativeName>
        <fullName evidence="1">Peptide-methionine (S)-S-oxide reductase</fullName>
        <shortName evidence="1">Peptide Met(O) reductase</shortName>
    </alternativeName>
</protein>
<gene>
    <name evidence="1" type="primary">msrA</name>
    <name type="ordered locus">SFV_4269</name>
</gene>
<proteinExistence type="inferred from homology"/>
<comment type="function">
    <text evidence="1">Has an important function as a repair enzyme for proteins that have been inactivated by oxidation. Catalyzes the reversible oxidation-reduction of methionine sulfoxide in proteins to methionine.</text>
</comment>
<comment type="catalytic activity">
    <reaction evidence="1">
        <text>L-methionyl-[protein] + [thioredoxin]-disulfide + H2O = L-methionyl-(S)-S-oxide-[protein] + [thioredoxin]-dithiol</text>
        <dbReference type="Rhea" id="RHEA:14217"/>
        <dbReference type="Rhea" id="RHEA-COMP:10698"/>
        <dbReference type="Rhea" id="RHEA-COMP:10700"/>
        <dbReference type="Rhea" id="RHEA-COMP:12313"/>
        <dbReference type="Rhea" id="RHEA-COMP:12315"/>
        <dbReference type="ChEBI" id="CHEBI:15377"/>
        <dbReference type="ChEBI" id="CHEBI:16044"/>
        <dbReference type="ChEBI" id="CHEBI:29950"/>
        <dbReference type="ChEBI" id="CHEBI:44120"/>
        <dbReference type="ChEBI" id="CHEBI:50058"/>
        <dbReference type="EC" id="1.8.4.11"/>
    </reaction>
</comment>
<comment type="catalytic activity">
    <reaction evidence="1">
        <text>[thioredoxin]-disulfide + L-methionine + H2O = L-methionine (S)-S-oxide + [thioredoxin]-dithiol</text>
        <dbReference type="Rhea" id="RHEA:19993"/>
        <dbReference type="Rhea" id="RHEA-COMP:10698"/>
        <dbReference type="Rhea" id="RHEA-COMP:10700"/>
        <dbReference type="ChEBI" id="CHEBI:15377"/>
        <dbReference type="ChEBI" id="CHEBI:29950"/>
        <dbReference type="ChEBI" id="CHEBI:50058"/>
        <dbReference type="ChEBI" id="CHEBI:57844"/>
        <dbReference type="ChEBI" id="CHEBI:58772"/>
        <dbReference type="EC" id="1.8.4.11"/>
    </reaction>
</comment>
<comment type="similarity">
    <text evidence="1">Belongs to the MsrA Met sulfoxide reductase family.</text>
</comment>
<reference key="1">
    <citation type="journal article" date="2006" name="BMC Genomics">
        <title>Complete genome sequence of Shigella flexneri 5b and comparison with Shigella flexneri 2a.</title>
        <authorList>
            <person name="Nie H."/>
            <person name="Yang F."/>
            <person name="Zhang X."/>
            <person name="Yang J."/>
            <person name="Chen L."/>
            <person name="Wang J."/>
            <person name="Xiong Z."/>
            <person name="Peng J."/>
            <person name="Sun L."/>
            <person name="Dong J."/>
            <person name="Xue Y."/>
            <person name="Xu X."/>
            <person name="Chen S."/>
            <person name="Yao Z."/>
            <person name="Shen Y."/>
            <person name="Jin Q."/>
        </authorList>
    </citation>
    <scope>NUCLEOTIDE SEQUENCE [LARGE SCALE GENOMIC DNA]</scope>
    <source>
        <strain>8401</strain>
    </source>
</reference>
<dbReference type="EC" id="1.8.4.11" evidence="1"/>
<dbReference type="EMBL" id="CP000266">
    <property type="protein sequence ID" value="ABF06250.1"/>
    <property type="molecule type" value="Genomic_DNA"/>
</dbReference>
<dbReference type="RefSeq" id="WP_001295196.1">
    <property type="nucleotide sequence ID" value="NC_008258.1"/>
</dbReference>
<dbReference type="SMR" id="Q0SXG5"/>
<dbReference type="GeneID" id="93777602"/>
<dbReference type="KEGG" id="sfv:SFV_4269"/>
<dbReference type="HOGENOM" id="CLU_031040_10_3_6"/>
<dbReference type="Proteomes" id="UP000000659">
    <property type="component" value="Chromosome"/>
</dbReference>
<dbReference type="GO" id="GO:0005737">
    <property type="term" value="C:cytoplasm"/>
    <property type="evidence" value="ECO:0007669"/>
    <property type="project" value="TreeGrafter"/>
</dbReference>
<dbReference type="GO" id="GO:0036456">
    <property type="term" value="F:L-methionine-(S)-S-oxide reductase activity"/>
    <property type="evidence" value="ECO:0007669"/>
    <property type="project" value="TreeGrafter"/>
</dbReference>
<dbReference type="GO" id="GO:0008113">
    <property type="term" value="F:peptide-methionine (S)-S-oxide reductase activity"/>
    <property type="evidence" value="ECO:0007669"/>
    <property type="project" value="UniProtKB-UniRule"/>
</dbReference>
<dbReference type="GO" id="GO:0034599">
    <property type="term" value="P:cellular response to oxidative stress"/>
    <property type="evidence" value="ECO:0007669"/>
    <property type="project" value="TreeGrafter"/>
</dbReference>
<dbReference type="GO" id="GO:0036211">
    <property type="term" value="P:protein modification process"/>
    <property type="evidence" value="ECO:0007669"/>
    <property type="project" value="UniProtKB-UniRule"/>
</dbReference>
<dbReference type="FunFam" id="3.30.1060.10:FF:000001">
    <property type="entry name" value="Peptide methionine sulfoxide reductase MsrA"/>
    <property type="match status" value="1"/>
</dbReference>
<dbReference type="Gene3D" id="3.30.1060.10">
    <property type="entry name" value="Peptide methionine sulphoxide reductase MsrA"/>
    <property type="match status" value="1"/>
</dbReference>
<dbReference type="HAMAP" id="MF_01401">
    <property type="entry name" value="MsrA"/>
    <property type="match status" value="1"/>
</dbReference>
<dbReference type="InterPro" id="IPR002569">
    <property type="entry name" value="Met_Sox_Rdtase_MsrA_dom"/>
</dbReference>
<dbReference type="InterPro" id="IPR036509">
    <property type="entry name" value="Met_Sox_Rdtase_MsrA_sf"/>
</dbReference>
<dbReference type="InterPro" id="IPR050162">
    <property type="entry name" value="MsrA_MetSO_reductase"/>
</dbReference>
<dbReference type="NCBIfam" id="TIGR00401">
    <property type="entry name" value="msrA"/>
    <property type="match status" value="1"/>
</dbReference>
<dbReference type="PANTHER" id="PTHR42799">
    <property type="entry name" value="MITOCHONDRIAL PEPTIDE METHIONINE SULFOXIDE REDUCTASE"/>
    <property type="match status" value="1"/>
</dbReference>
<dbReference type="PANTHER" id="PTHR42799:SF2">
    <property type="entry name" value="MITOCHONDRIAL PEPTIDE METHIONINE SULFOXIDE REDUCTASE"/>
    <property type="match status" value="1"/>
</dbReference>
<dbReference type="Pfam" id="PF01625">
    <property type="entry name" value="PMSR"/>
    <property type="match status" value="1"/>
</dbReference>
<dbReference type="SUPFAM" id="SSF55068">
    <property type="entry name" value="Peptide methionine sulfoxide reductase"/>
    <property type="match status" value="1"/>
</dbReference>
<keyword id="KW-0560">Oxidoreductase</keyword>
<evidence type="ECO:0000255" key="1">
    <source>
        <dbReference type="HAMAP-Rule" id="MF_01401"/>
    </source>
</evidence>
<organism>
    <name type="scientific">Shigella flexneri serotype 5b (strain 8401)</name>
    <dbReference type="NCBI Taxonomy" id="373384"/>
    <lineage>
        <taxon>Bacteria</taxon>
        <taxon>Pseudomonadati</taxon>
        <taxon>Pseudomonadota</taxon>
        <taxon>Gammaproteobacteria</taxon>
        <taxon>Enterobacterales</taxon>
        <taxon>Enterobacteriaceae</taxon>
        <taxon>Shigella</taxon>
    </lineage>
</organism>